<protein>
    <recommendedName>
        <fullName>Riboflavin biosynthesis protein RibD</fullName>
    </recommendedName>
    <domain>
        <recommendedName>
            <fullName>Diaminohydroxyphosphoribosylaminopyrimidine deaminase</fullName>
            <shortName>DRAP deaminase</shortName>
            <ecNumber>3.5.4.26</ecNumber>
        </recommendedName>
        <alternativeName>
            <fullName>Riboflavin-specific deaminase</fullName>
        </alternativeName>
    </domain>
    <domain>
        <recommendedName>
            <fullName>5-amino-6-(5-phosphoribosylamino)uracil reductase</fullName>
            <ecNumber>1.1.1.193</ecNumber>
        </recommendedName>
        <alternativeName>
            <fullName>HTP reductase</fullName>
        </alternativeName>
    </domain>
</protein>
<name>RIBD_HAEIN</name>
<comment type="function">
    <text>Converts 2,5-diamino-6-(ribosylamino)-4(3h)-pyrimidinone 5'-phosphate into 5-amino-6-(ribosylamino)-2,4(1h,3h)-pyrimidinedione 5'-phosphate.</text>
</comment>
<comment type="catalytic activity">
    <reaction>
        <text>2,5-diamino-6-hydroxy-4-(5-phosphoribosylamino)-pyrimidine + H2O + H(+) = 5-amino-6-(5-phospho-D-ribosylamino)uracil + NH4(+)</text>
        <dbReference type="Rhea" id="RHEA:21868"/>
        <dbReference type="ChEBI" id="CHEBI:15377"/>
        <dbReference type="ChEBI" id="CHEBI:15378"/>
        <dbReference type="ChEBI" id="CHEBI:28938"/>
        <dbReference type="ChEBI" id="CHEBI:58453"/>
        <dbReference type="ChEBI" id="CHEBI:58614"/>
        <dbReference type="EC" id="3.5.4.26"/>
    </reaction>
</comment>
<comment type="catalytic activity">
    <reaction>
        <text>5-amino-6-(5-phospho-D-ribitylamino)uracil + NADP(+) = 5-amino-6-(5-phospho-D-ribosylamino)uracil + NADPH + H(+)</text>
        <dbReference type="Rhea" id="RHEA:17845"/>
        <dbReference type="ChEBI" id="CHEBI:15378"/>
        <dbReference type="ChEBI" id="CHEBI:57783"/>
        <dbReference type="ChEBI" id="CHEBI:58349"/>
        <dbReference type="ChEBI" id="CHEBI:58421"/>
        <dbReference type="ChEBI" id="CHEBI:58453"/>
        <dbReference type="EC" id="1.1.1.193"/>
    </reaction>
</comment>
<comment type="cofactor">
    <cofactor evidence="1">
        <name>Zn(2+)</name>
        <dbReference type="ChEBI" id="CHEBI:29105"/>
    </cofactor>
    <text evidence="1">Binds 1 zinc ion.</text>
</comment>
<comment type="pathway">
    <text>Cofactor biosynthesis; riboflavin biosynthesis; 5-amino-6-(D-ribitylamino)uracil from GTP: step 2/4.</text>
</comment>
<comment type="pathway">
    <text>Cofactor biosynthesis; riboflavin biosynthesis; 5-amino-6-(D-ribitylamino)uracil from GTP: step 3/4.</text>
</comment>
<comment type="similarity">
    <text evidence="3">In the N-terminal section; belongs to the cytidine and deoxycytidylate deaminase family.</text>
</comment>
<comment type="similarity">
    <text evidence="3">In the C-terminal section; belongs to the HTP reductase family.</text>
</comment>
<dbReference type="EC" id="3.5.4.26"/>
<dbReference type="EC" id="1.1.1.193"/>
<dbReference type="EMBL" id="L42023">
    <property type="protein sequence ID" value="AAC22598.1"/>
    <property type="molecule type" value="Genomic_DNA"/>
</dbReference>
<dbReference type="PIR" id="H64103">
    <property type="entry name" value="H64103"/>
</dbReference>
<dbReference type="RefSeq" id="NP_439104.1">
    <property type="nucleotide sequence ID" value="NC_000907.1"/>
</dbReference>
<dbReference type="SMR" id="P44326"/>
<dbReference type="STRING" id="71421.HI_0944"/>
<dbReference type="EnsemblBacteria" id="AAC22598">
    <property type="protein sequence ID" value="AAC22598"/>
    <property type="gene ID" value="HI_0944"/>
</dbReference>
<dbReference type="KEGG" id="hin:HI_0944"/>
<dbReference type="PATRIC" id="fig|71421.8.peg.985"/>
<dbReference type="eggNOG" id="COG0117">
    <property type="taxonomic scope" value="Bacteria"/>
</dbReference>
<dbReference type="eggNOG" id="COG1985">
    <property type="taxonomic scope" value="Bacteria"/>
</dbReference>
<dbReference type="HOGENOM" id="CLU_036590_1_2_6"/>
<dbReference type="OrthoDB" id="9800865at2"/>
<dbReference type="PhylomeDB" id="P44326"/>
<dbReference type="BioCyc" id="HINF71421:G1GJ1-984-MONOMER"/>
<dbReference type="UniPathway" id="UPA00275">
    <property type="reaction ID" value="UER00401"/>
</dbReference>
<dbReference type="UniPathway" id="UPA00275">
    <property type="reaction ID" value="UER00402"/>
</dbReference>
<dbReference type="Proteomes" id="UP000000579">
    <property type="component" value="Chromosome"/>
</dbReference>
<dbReference type="GO" id="GO:0008703">
    <property type="term" value="F:5-amino-6-(5-phosphoribosylamino)uracil reductase activity"/>
    <property type="evidence" value="ECO:0007669"/>
    <property type="project" value="UniProtKB-EC"/>
</dbReference>
<dbReference type="GO" id="GO:0008835">
    <property type="term" value="F:diaminohydroxyphosphoribosylaminopyrimidine deaminase activity"/>
    <property type="evidence" value="ECO:0000318"/>
    <property type="project" value="GO_Central"/>
</dbReference>
<dbReference type="GO" id="GO:0050661">
    <property type="term" value="F:NADP binding"/>
    <property type="evidence" value="ECO:0007669"/>
    <property type="project" value="InterPro"/>
</dbReference>
<dbReference type="GO" id="GO:0008270">
    <property type="term" value="F:zinc ion binding"/>
    <property type="evidence" value="ECO:0007669"/>
    <property type="project" value="InterPro"/>
</dbReference>
<dbReference type="GO" id="GO:0009231">
    <property type="term" value="P:riboflavin biosynthetic process"/>
    <property type="evidence" value="ECO:0007669"/>
    <property type="project" value="UniProtKB-UniPathway"/>
</dbReference>
<dbReference type="CDD" id="cd01284">
    <property type="entry name" value="Riboflavin_deaminase-reductase"/>
    <property type="match status" value="1"/>
</dbReference>
<dbReference type="FunFam" id="3.40.140.10:FF:000025">
    <property type="entry name" value="Riboflavin biosynthesis protein RibD"/>
    <property type="match status" value="1"/>
</dbReference>
<dbReference type="Gene3D" id="3.40.140.10">
    <property type="entry name" value="Cytidine Deaminase, domain 2"/>
    <property type="match status" value="1"/>
</dbReference>
<dbReference type="Gene3D" id="3.40.430.10">
    <property type="entry name" value="Dihydrofolate Reductase, subunit A"/>
    <property type="match status" value="1"/>
</dbReference>
<dbReference type="InterPro" id="IPR016192">
    <property type="entry name" value="APOBEC/CMP_deaminase_Zn-bd"/>
</dbReference>
<dbReference type="InterPro" id="IPR002125">
    <property type="entry name" value="CMP_dCMP_dom"/>
</dbReference>
<dbReference type="InterPro" id="IPR016193">
    <property type="entry name" value="Cytidine_deaminase-like"/>
</dbReference>
<dbReference type="InterPro" id="IPR024072">
    <property type="entry name" value="DHFR-like_dom_sf"/>
</dbReference>
<dbReference type="InterPro" id="IPR004794">
    <property type="entry name" value="Eubact_RibD"/>
</dbReference>
<dbReference type="InterPro" id="IPR011549">
    <property type="entry name" value="RibD_C"/>
</dbReference>
<dbReference type="InterPro" id="IPR002734">
    <property type="entry name" value="RibDG_C"/>
</dbReference>
<dbReference type="InterPro" id="IPR050765">
    <property type="entry name" value="Riboflavin_Biosynth_HTPR"/>
</dbReference>
<dbReference type="NCBIfam" id="TIGR00326">
    <property type="entry name" value="eubact_ribD"/>
    <property type="match status" value="1"/>
</dbReference>
<dbReference type="NCBIfam" id="NF008052">
    <property type="entry name" value="PRK10786.1"/>
    <property type="match status" value="1"/>
</dbReference>
<dbReference type="NCBIfam" id="TIGR00227">
    <property type="entry name" value="ribD_Cterm"/>
    <property type="match status" value="1"/>
</dbReference>
<dbReference type="PANTHER" id="PTHR38011:SF7">
    <property type="entry name" value="2,5-DIAMINO-6-RIBOSYLAMINO-4(3H)-PYRIMIDINONE 5'-PHOSPHATE REDUCTASE"/>
    <property type="match status" value="1"/>
</dbReference>
<dbReference type="PANTHER" id="PTHR38011">
    <property type="entry name" value="DIHYDROFOLATE REDUCTASE FAMILY PROTEIN (AFU_ORTHOLOGUE AFUA_8G06820)"/>
    <property type="match status" value="1"/>
</dbReference>
<dbReference type="Pfam" id="PF00383">
    <property type="entry name" value="dCMP_cyt_deam_1"/>
    <property type="match status" value="1"/>
</dbReference>
<dbReference type="Pfam" id="PF01872">
    <property type="entry name" value="RibD_C"/>
    <property type="match status" value="1"/>
</dbReference>
<dbReference type="PIRSF" id="PIRSF006769">
    <property type="entry name" value="RibD"/>
    <property type="match status" value="1"/>
</dbReference>
<dbReference type="SUPFAM" id="SSF53927">
    <property type="entry name" value="Cytidine deaminase-like"/>
    <property type="match status" value="1"/>
</dbReference>
<dbReference type="SUPFAM" id="SSF53597">
    <property type="entry name" value="Dihydrofolate reductase-like"/>
    <property type="match status" value="1"/>
</dbReference>
<dbReference type="PROSITE" id="PS00903">
    <property type="entry name" value="CYT_DCMP_DEAMINASES_1"/>
    <property type="match status" value="1"/>
</dbReference>
<dbReference type="PROSITE" id="PS51747">
    <property type="entry name" value="CYT_DCMP_DEAMINASES_2"/>
    <property type="match status" value="1"/>
</dbReference>
<feature type="chain" id="PRO_0000171722" description="Riboflavin biosynthesis protein RibD">
    <location>
        <begin position="1"/>
        <end position="372"/>
    </location>
</feature>
<feature type="domain" description="CMP/dCMP-type deaminase" evidence="2">
    <location>
        <begin position="6"/>
        <end position="128"/>
    </location>
</feature>
<feature type="region of interest" description="Deaminase">
    <location>
        <begin position="1"/>
        <end position="150"/>
    </location>
</feature>
<feature type="region of interest" description="Reductase">
    <location>
        <begin position="151"/>
        <end position="372"/>
    </location>
</feature>
<feature type="active site" description="Proton donor" evidence="1">
    <location>
        <position position="57"/>
    </location>
</feature>
<feature type="binding site" evidence="1">
    <location>
        <position position="55"/>
    </location>
    <ligand>
        <name>Zn(2+)</name>
        <dbReference type="ChEBI" id="CHEBI:29105"/>
        <note>catalytic</note>
    </ligand>
</feature>
<feature type="binding site" evidence="1">
    <location>
        <position position="80"/>
    </location>
    <ligand>
        <name>Zn(2+)</name>
        <dbReference type="ChEBI" id="CHEBI:29105"/>
        <note>catalytic</note>
    </ligand>
</feature>
<feature type="binding site" evidence="1">
    <location>
        <position position="89"/>
    </location>
    <ligand>
        <name>Zn(2+)</name>
        <dbReference type="ChEBI" id="CHEBI:29105"/>
        <note>catalytic</note>
    </ligand>
</feature>
<feature type="binding site" evidence="1">
    <location>
        <position position="159"/>
    </location>
    <ligand>
        <name>NADP(+)</name>
        <dbReference type="ChEBI" id="CHEBI:58349"/>
    </ligand>
</feature>
<feature type="binding site" evidence="1">
    <location>
        <begin position="166"/>
        <end position="169"/>
    </location>
    <ligand>
        <name>NADP(+)</name>
        <dbReference type="ChEBI" id="CHEBI:58349"/>
    </ligand>
</feature>
<feature type="binding site" evidence="1">
    <location>
        <position position="173"/>
    </location>
    <ligand>
        <name>substrate</name>
    </ligand>
</feature>
<feature type="binding site" evidence="1">
    <location>
        <position position="175"/>
    </location>
    <ligand>
        <name>NADP(+)</name>
        <dbReference type="ChEBI" id="CHEBI:58349"/>
    </ligand>
</feature>
<feature type="binding site" evidence="1">
    <location>
        <position position="189"/>
    </location>
    <ligand>
        <name>substrate</name>
    </ligand>
</feature>
<feature type="binding site" evidence="1">
    <location>
        <position position="201"/>
    </location>
    <ligand>
        <name>NADP(+)</name>
        <dbReference type="ChEBI" id="CHEBI:58349"/>
    </ligand>
</feature>
<feature type="binding site" evidence="1">
    <location>
        <position position="205"/>
    </location>
    <ligand>
        <name>NADP(+)</name>
        <dbReference type="ChEBI" id="CHEBI:58349"/>
    </ligand>
</feature>
<feature type="binding site" evidence="1">
    <location>
        <position position="209"/>
    </location>
    <ligand>
        <name>substrate</name>
    </ligand>
</feature>
<feature type="binding site" evidence="1">
    <location>
        <position position="212"/>
    </location>
    <ligand>
        <name>substrate</name>
    </ligand>
</feature>
<feature type="binding site" evidence="1">
    <location>
        <position position="239"/>
    </location>
    <ligand>
        <name>NADP(+)</name>
        <dbReference type="ChEBI" id="CHEBI:58349"/>
    </ligand>
</feature>
<feature type="binding site" evidence="1">
    <location>
        <position position="302"/>
    </location>
    <ligand>
        <name>substrate</name>
    </ligand>
</feature>
<feature type="binding site" evidence="1">
    <location>
        <begin position="304"/>
        <end position="310"/>
    </location>
    <ligand>
        <name>NADP(+)</name>
        <dbReference type="ChEBI" id="CHEBI:58349"/>
    </ligand>
</feature>
<sequence length="372" mass="40931">MLEFSSQDCVFMQRALDLAAKGQYTTTPNPSVGCVLVKNGEIVGEGFHFKAGQPHAERVALAQAGENAKGATAYVTLEPCAHYGRTPPCALGLIEAGVVKVIAAMQDPNPQVAGKGLKMLSDAGIESTVNLLNDQAEKINKGFLKRMRQGMPFVQLKLAMSLDGRTAMASGESKWITGPDARSDVQKMRAKSSALLSTSTTVIADDPSLNVRWDEFPENLKTEYKKEWLRQPVRVILDSQHRIQPTHKLFLTHSPVWLVSSEPRDLTGFPDFCEQIIFPKENLLKELMRELGKRQINTLWVEAGANLSGSLIDAKLVDELIIYIAPKLLGDNARGLCQLPNLTKLADAPLWQLNELEQIGDDIKLTYTPKGV</sequence>
<evidence type="ECO:0000250" key="1"/>
<evidence type="ECO:0000255" key="2">
    <source>
        <dbReference type="PROSITE-ProRule" id="PRU01083"/>
    </source>
</evidence>
<evidence type="ECO:0000305" key="3"/>
<gene>
    <name type="primary">ribD</name>
    <name type="synonym">ribG</name>
    <name type="ordered locus">HI_0944</name>
</gene>
<organism>
    <name type="scientific">Haemophilus influenzae (strain ATCC 51907 / DSM 11121 / KW20 / Rd)</name>
    <dbReference type="NCBI Taxonomy" id="71421"/>
    <lineage>
        <taxon>Bacteria</taxon>
        <taxon>Pseudomonadati</taxon>
        <taxon>Pseudomonadota</taxon>
        <taxon>Gammaproteobacteria</taxon>
        <taxon>Pasteurellales</taxon>
        <taxon>Pasteurellaceae</taxon>
        <taxon>Haemophilus</taxon>
    </lineage>
</organism>
<reference key="1">
    <citation type="journal article" date="1995" name="Science">
        <title>Whole-genome random sequencing and assembly of Haemophilus influenzae Rd.</title>
        <authorList>
            <person name="Fleischmann R.D."/>
            <person name="Adams M.D."/>
            <person name="White O."/>
            <person name="Clayton R.A."/>
            <person name="Kirkness E.F."/>
            <person name="Kerlavage A.R."/>
            <person name="Bult C.J."/>
            <person name="Tomb J.-F."/>
            <person name="Dougherty B.A."/>
            <person name="Merrick J.M."/>
            <person name="McKenney K."/>
            <person name="Sutton G.G."/>
            <person name="FitzHugh W."/>
            <person name="Fields C.A."/>
            <person name="Gocayne J.D."/>
            <person name="Scott J.D."/>
            <person name="Shirley R."/>
            <person name="Liu L.-I."/>
            <person name="Glodek A."/>
            <person name="Kelley J.M."/>
            <person name="Weidman J.F."/>
            <person name="Phillips C.A."/>
            <person name="Spriggs T."/>
            <person name="Hedblom E."/>
            <person name="Cotton M.D."/>
            <person name="Utterback T.R."/>
            <person name="Hanna M.C."/>
            <person name="Nguyen D.T."/>
            <person name="Saudek D.M."/>
            <person name="Brandon R.C."/>
            <person name="Fine L.D."/>
            <person name="Fritchman J.L."/>
            <person name="Fuhrmann J.L."/>
            <person name="Geoghagen N.S.M."/>
            <person name="Gnehm C.L."/>
            <person name="McDonald L.A."/>
            <person name="Small K.V."/>
            <person name="Fraser C.M."/>
            <person name="Smith H.O."/>
            <person name="Venter J.C."/>
        </authorList>
    </citation>
    <scope>NUCLEOTIDE SEQUENCE [LARGE SCALE GENOMIC DNA]</scope>
    <source>
        <strain>ATCC 51907 / DSM 11121 / KW20 / Rd</strain>
    </source>
</reference>
<accession>P44326</accession>
<proteinExistence type="inferred from homology"/>
<keyword id="KW-0378">Hydrolase</keyword>
<keyword id="KW-0479">Metal-binding</keyword>
<keyword id="KW-0511">Multifunctional enzyme</keyword>
<keyword id="KW-0521">NADP</keyword>
<keyword id="KW-0560">Oxidoreductase</keyword>
<keyword id="KW-1185">Reference proteome</keyword>
<keyword id="KW-0686">Riboflavin biosynthesis</keyword>
<keyword id="KW-0862">Zinc</keyword>